<feature type="chain" id="PRO_1000115822" description="Enolase">
    <location>
        <begin position="1"/>
        <end position="436"/>
    </location>
</feature>
<feature type="active site" description="Proton donor" evidence="1">
    <location>
        <position position="209"/>
    </location>
</feature>
<feature type="active site" description="Proton acceptor" evidence="1">
    <location>
        <position position="343"/>
    </location>
</feature>
<feature type="binding site" evidence="1">
    <location>
        <position position="167"/>
    </location>
    <ligand>
        <name>(2R)-2-phosphoglycerate</name>
        <dbReference type="ChEBI" id="CHEBI:58289"/>
    </ligand>
</feature>
<feature type="binding site" evidence="1">
    <location>
        <position position="246"/>
    </location>
    <ligand>
        <name>Mg(2+)</name>
        <dbReference type="ChEBI" id="CHEBI:18420"/>
    </ligand>
</feature>
<feature type="binding site" evidence="1">
    <location>
        <position position="291"/>
    </location>
    <ligand>
        <name>Mg(2+)</name>
        <dbReference type="ChEBI" id="CHEBI:18420"/>
    </ligand>
</feature>
<feature type="binding site" evidence="1">
    <location>
        <position position="318"/>
    </location>
    <ligand>
        <name>Mg(2+)</name>
        <dbReference type="ChEBI" id="CHEBI:18420"/>
    </ligand>
</feature>
<feature type="binding site" evidence="1">
    <location>
        <position position="343"/>
    </location>
    <ligand>
        <name>(2R)-2-phosphoglycerate</name>
        <dbReference type="ChEBI" id="CHEBI:58289"/>
    </ligand>
</feature>
<feature type="binding site" evidence="1">
    <location>
        <position position="372"/>
    </location>
    <ligand>
        <name>(2R)-2-phosphoglycerate</name>
        <dbReference type="ChEBI" id="CHEBI:58289"/>
    </ligand>
</feature>
<feature type="binding site" evidence="1">
    <location>
        <position position="373"/>
    </location>
    <ligand>
        <name>(2R)-2-phosphoglycerate</name>
        <dbReference type="ChEBI" id="CHEBI:58289"/>
    </ligand>
</feature>
<feature type="binding site" evidence="1">
    <location>
        <position position="394"/>
    </location>
    <ligand>
        <name>(2R)-2-phosphoglycerate</name>
        <dbReference type="ChEBI" id="CHEBI:58289"/>
    </ligand>
</feature>
<comment type="function">
    <text evidence="1">Catalyzes the reversible conversion of 2-phosphoglycerate (2-PG) into phosphoenolpyruvate (PEP). It is essential for the degradation of carbohydrates via glycolysis.</text>
</comment>
<comment type="catalytic activity">
    <reaction evidence="1">
        <text>(2R)-2-phosphoglycerate = phosphoenolpyruvate + H2O</text>
        <dbReference type="Rhea" id="RHEA:10164"/>
        <dbReference type="ChEBI" id="CHEBI:15377"/>
        <dbReference type="ChEBI" id="CHEBI:58289"/>
        <dbReference type="ChEBI" id="CHEBI:58702"/>
        <dbReference type="EC" id="4.2.1.11"/>
    </reaction>
</comment>
<comment type="cofactor">
    <cofactor evidence="1">
        <name>Mg(2+)</name>
        <dbReference type="ChEBI" id="CHEBI:18420"/>
    </cofactor>
    <text evidence="1">Binds a second Mg(2+) ion via substrate during catalysis.</text>
</comment>
<comment type="pathway">
    <text evidence="1">Carbohydrate degradation; glycolysis; pyruvate from D-glyceraldehyde 3-phosphate: step 4/5.</text>
</comment>
<comment type="subunit">
    <text evidence="1">Component of the RNA degradosome, a multiprotein complex involved in RNA processing and mRNA degradation.</text>
</comment>
<comment type="subcellular location">
    <subcellularLocation>
        <location evidence="1">Cytoplasm</location>
    </subcellularLocation>
    <subcellularLocation>
        <location evidence="1">Secreted</location>
    </subcellularLocation>
    <subcellularLocation>
        <location evidence="1">Cell surface</location>
    </subcellularLocation>
    <text evidence="1">Fractions of enolase are present in both the cytoplasm and on the cell surface.</text>
</comment>
<comment type="similarity">
    <text evidence="1">Belongs to the enolase family.</text>
</comment>
<gene>
    <name evidence="1" type="primary">eno</name>
    <name type="ordered locus">APJL_1132</name>
</gene>
<name>ENO_ACTPJ</name>
<evidence type="ECO:0000255" key="1">
    <source>
        <dbReference type="HAMAP-Rule" id="MF_00318"/>
    </source>
</evidence>
<dbReference type="EC" id="4.2.1.11" evidence="1"/>
<dbReference type="EMBL" id="CP000687">
    <property type="protein sequence ID" value="ABY69688.1"/>
    <property type="molecule type" value="Genomic_DNA"/>
</dbReference>
<dbReference type="RefSeq" id="WP_005604850.1">
    <property type="nucleotide sequence ID" value="NC_010278.1"/>
</dbReference>
<dbReference type="SMR" id="B0BQ53"/>
<dbReference type="KEGG" id="apj:APJL_1132"/>
<dbReference type="HOGENOM" id="CLU_031223_2_1_6"/>
<dbReference type="UniPathway" id="UPA00109">
    <property type="reaction ID" value="UER00187"/>
</dbReference>
<dbReference type="Proteomes" id="UP000008547">
    <property type="component" value="Chromosome"/>
</dbReference>
<dbReference type="GO" id="GO:0009986">
    <property type="term" value="C:cell surface"/>
    <property type="evidence" value="ECO:0007669"/>
    <property type="project" value="UniProtKB-SubCell"/>
</dbReference>
<dbReference type="GO" id="GO:0005576">
    <property type="term" value="C:extracellular region"/>
    <property type="evidence" value="ECO:0007669"/>
    <property type="project" value="UniProtKB-SubCell"/>
</dbReference>
<dbReference type="GO" id="GO:0000015">
    <property type="term" value="C:phosphopyruvate hydratase complex"/>
    <property type="evidence" value="ECO:0007669"/>
    <property type="project" value="InterPro"/>
</dbReference>
<dbReference type="GO" id="GO:0000287">
    <property type="term" value="F:magnesium ion binding"/>
    <property type="evidence" value="ECO:0007669"/>
    <property type="project" value="UniProtKB-UniRule"/>
</dbReference>
<dbReference type="GO" id="GO:0004634">
    <property type="term" value="F:phosphopyruvate hydratase activity"/>
    <property type="evidence" value="ECO:0007669"/>
    <property type="project" value="UniProtKB-UniRule"/>
</dbReference>
<dbReference type="GO" id="GO:0006096">
    <property type="term" value="P:glycolytic process"/>
    <property type="evidence" value="ECO:0007669"/>
    <property type="project" value="UniProtKB-UniRule"/>
</dbReference>
<dbReference type="CDD" id="cd03313">
    <property type="entry name" value="enolase"/>
    <property type="match status" value="1"/>
</dbReference>
<dbReference type="FunFam" id="3.20.20.120:FF:000001">
    <property type="entry name" value="Enolase"/>
    <property type="match status" value="1"/>
</dbReference>
<dbReference type="FunFam" id="3.30.390.10:FF:000001">
    <property type="entry name" value="Enolase"/>
    <property type="match status" value="1"/>
</dbReference>
<dbReference type="Gene3D" id="3.20.20.120">
    <property type="entry name" value="Enolase-like C-terminal domain"/>
    <property type="match status" value="1"/>
</dbReference>
<dbReference type="Gene3D" id="3.30.390.10">
    <property type="entry name" value="Enolase-like, N-terminal domain"/>
    <property type="match status" value="1"/>
</dbReference>
<dbReference type="HAMAP" id="MF_00318">
    <property type="entry name" value="Enolase"/>
    <property type="match status" value="1"/>
</dbReference>
<dbReference type="InterPro" id="IPR000941">
    <property type="entry name" value="Enolase"/>
</dbReference>
<dbReference type="InterPro" id="IPR036849">
    <property type="entry name" value="Enolase-like_C_sf"/>
</dbReference>
<dbReference type="InterPro" id="IPR029017">
    <property type="entry name" value="Enolase-like_N"/>
</dbReference>
<dbReference type="InterPro" id="IPR020810">
    <property type="entry name" value="Enolase_C"/>
</dbReference>
<dbReference type="InterPro" id="IPR020809">
    <property type="entry name" value="Enolase_CS"/>
</dbReference>
<dbReference type="InterPro" id="IPR020811">
    <property type="entry name" value="Enolase_N"/>
</dbReference>
<dbReference type="NCBIfam" id="TIGR01060">
    <property type="entry name" value="eno"/>
    <property type="match status" value="1"/>
</dbReference>
<dbReference type="PANTHER" id="PTHR11902">
    <property type="entry name" value="ENOLASE"/>
    <property type="match status" value="1"/>
</dbReference>
<dbReference type="PANTHER" id="PTHR11902:SF1">
    <property type="entry name" value="ENOLASE"/>
    <property type="match status" value="1"/>
</dbReference>
<dbReference type="Pfam" id="PF00113">
    <property type="entry name" value="Enolase_C"/>
    <property type="match status" value="1"/>
</dbReference>
<dbReference type="Pfam" id="PF03952">
    <property type="entry name" value="Enolase_N"/>
    <property type="match status" value="1"/>
</dbReference>
<dbReference type="PIRSF" id="PIRSF001400">
    <property type="entry name" value="Enolase"/>
    <property type="match status" value="1"/>
</dbReference>
<dbReference type="PRINTS" id="PR00148">
    <property type="entry name" value="ENOLASE"/>
</dbReference>
<dbReference type="SFLD" id="SFLDF00002">
    <property type="entry name" value="enolase"/>
    <property type="match status" value="1"/>
</dbReference>
<dbReference type="SFLD" id="SFLDG00178">
    <property type="entry name" value="enolase"/>
    <property type="match status" value="1"/>
</dbReference>
<dbReference type="SMART" id="SM01192">
    <property type="entry name" value="Enolase_C"/>
    <property type="match status" value="1"/>
</dbReference>
<dbReference type="SMART" id="SM01193">
    <property type="entry name" value="Enolase_N"/>
    <property type="match status" value="1"/>
</dbReference>
<dbReference type="SUPFAM" id="SSF51604">
    <property type="entry name" value="Enolase C-terminal domain-like"/>
    <property type="match status" value="1"/>
</dbReference>
<dbReference type="SUPFAM" id="SSF54826">
    <property type="entry name" value="Enolase N-terminal domain-like"/>
    <property type="match status" value="1"/>
</dbReference>
<dbReference type="PROSITE" id="PS00164">
    <property type="entry name" value="ENOLASE"/>
    <property type="match status" value="1"/>
</dbReference>
<reference key="1">
    <citation type="journal article" date="2008" name="PLoS ONE">
        <title>Genome biology of Actinobacillus pleuropneumoniae JL03, an isolate of serotype 3 prevalent in China.</title>
        <authorList>
            <person name="Xu Z."/>
            <person name="Zhou Y."/>
            <person name="Li L."/>
            <person name="Zhou R."/>
            <person name="Xiao S."/>
            <person name="Wan Y."/>
            <person name="Zhang S."/>
            <person name="Wang K."/>
            <person name="Li W."/>
            <person name="Li L."/>
            <person name="Jin H."/>
            <person name="Kang M."/>
            <person name="Dalai B."/>
            <person name="Li T."/>
            <person name="Liu L."/>
            <person name="Cheng Y."/>
            <person name="Zhang L."/>
            <person name="Xu T."/>
            <person name="Zheng H."/>
            <person name="Pu S."/>
            <person name="Wang B."/>
            <person name="Gu W."/>
            <person name="Zhang X.L."/>
            <person name="Zhu G.-F."/>
            <person name="Wang S."/>
            <person name="Zhao G.-P."/>
            <person name="Chen H."/>
        </authorList>
    </citation>
    <scope>NUCLEOTIDE SEQUENCE [LARGE SCALE GENOMIC DNA]</scope>
    <source>
        <strain>JL03</strain>
    </source>
</reference>
<protein>
    <recommendedName>
        <fullName evidence="1">Enolase</fullName>
        <ecNumber evidence="1">4.2.1.11</ecNumber>
    </recommendedName>
    <alternativeName>
        <fullName evidence="1">2-phospho-D-glycerate hydro-lyase</fullName>
    </alternativeName>
    <alternativeName>
        <fullName evidence="1">2-phosphoglycerate dehydratase</fullName>
    </alternativeName>
</protein>
<proteinExistence type="inferred from homology"/>
<organism>
    <name type="scientific">Actinobacillus pleuropneumoniae serotype 3 (strain JL03)</name>
    <dbReference type="NCBI Taxonomy" id="434271"/>
    <lineage>
        <taxon>Bacteria</taxon>
        <taxon>Pseudomonadati</taxon>
        <taxon>Pseudomonadota</taxon>
        <taxon>Gammaproteobacteria</taxon>
        <taxon>Pasteurellales</taxon>
        <taxon>Pasteurellaceae</taxon>
        <taxon>Actinobacillus</taxon>
    </lineage>
</organism>
<sequence>MAKIVKVIGREIIDSRGNPTVEAEVHLEGGFVGLAAAPSGASTGSREALELRDGDKSRFLGKGVLKAVSAVNNEIAQAILGKDGSAQTEIDQIMIDLDGTDNKSKFGANAILAVSLATAKAAAASKGLPLYAYIAELNGTPGVYSMPLPMMNIINGGEHADNNVDIQEFMIQPVGASTLKEALRIGAEVFHNLAKVLKSKGLNTAVGDEGGFAPNLASNADALACIKEAVEKAGYVLGKDVTLAMDCASSEFYNKENGLYEMKGEGKSFTSQEFTHYLEGLCNEYPIKSIEDGQDESDWEGFAYQTKVLGGKIQLVGDDLFVTNTKILKEGIEKGIANSILIKFNQIGSLTETLAAIKMAKDAGYTAVISHRSGETEDATIADLAVGTAAGQIKTGSMSRSDRVAKYNQLIRIEEALAAAGTPAPFNGLKEVKGQA</sequence>
<keyword id="KW-0963">Cytoplasm</keyword>
<keyword id="KW-0324">Glycolysis</keyword>
<keyword id="KW-0456">Lyase</keyword>
<keyword id="KW-0460">Magnesium</keyword>
<keyword id="KW-0479">Metal-binding</keyword>
<keyword id="KW-0964">Secreted</keyword>
<accession>B0BQ53</accession>